<proteinExistence type="inferred from homology"/>
<organism>
    <name type="scientific">Mycolicibacterium smegmatis (strain ATCC 700084 / mc(2)155)</name>
    <name type="common">Mycobacterium smegmatis</name>
    <dbReference type="NCBI Taxonomy" id="246196"/>
    <lineage>
        <taxon>Bacteria</taxon>
        <taxon>Bacillati</taxon>
        <taxon>Actinomycetota</taxon>
        <taxon>Actinomycetes</taxon>
        <taxon>Mycobacteriales</taxon>
        <taxon>Mycobacteriaceae</taxon>
        <taxon>Mycolicibacterium</taxon>
    </lineage>
</organism>
<feature type="chain" id="PRO_0000076859" description="3-isopropylmalate dehydratase large subunit">
    <location>
        <begin position="1"/>
        <end position="422"/>
    </location>
</feature>
<feature type="binding site" evidence="1">
    <location>
        <position position="294"/>
    </location>
    <ligand>
        <name>[4Fe-4S] cluster</name>
        <dbReference type="ChEBI" id="CHEBI:49883"/>
    </ligand>
</feature>
<feature type="binding site" evidence="1">
    <location>
        <position position="354"/>
    </location>
    <ligand>
        <name>[4Fe-4S] cluster</name>
        <dbReference type="ChEBI" id="CHEBI:49883"/>
    </ligand>
</feature>
<feature type="binding site" evidence="1">
    <location>
        <position position="357"/>
    </location>
    <ligand>
        <name>[4Fe-4S] cluster</name>
        <dbReference type="ChEBI" id="CHEBI:49883"/>
    </ligand>
</feature>
<sequence length="422" mass="44668">MGMTIIEKILARKAGVAEVHAGEIVTVEVDMTVLIDLQFATMWMQPLMINDASKVAIVMDHAVPAPTIKDAAGGPNARKFANDYGIERFYDVGRHGICHQVIAENGLARPGEILACTDSHTCAGGAFNTAARGLGPAEVYSILCTGQTWFQASPTIRYELIGSMPAGVSGKDVFLYIADAFGDATNSNLEYGGPGLASIPLNDRRTIATQGAEISADFSTFAYDDVLAEHFDDLGITSYEPAHADPDAAYAAVREIDLSALAPYVARPGTVSRNGVSVDEVEPRKIDQAFIGSCANGQLDDLRIAAEILRGRRVAPGVRLIVTPASQQVYRDAMRLGYLQDIADAGAVITNSTCGACFGYHMGVVGPGEVCLTSSTRNFTGRMGSTEAEIYMASPATVAASAVAGHITDARKVVAQWLQVSL</sequence>
<dbReference type="EC" id="4.2.1.33" evidence="1"/>
<dbReference type="EMBL" id="AY054120">
    <property type="protein sequence ID" value="AAL17931.1"/>
    <property type="molecule type" value="Genomic_DNA"/>
</dbReference>
<dbReference type="EMBL" id="CP000480">
    <property type="protein sequence ID" value="ABK71814.1"/>
    <property type="molecule type" value="Genomic_DNA"/>
</dbReference>
<dbReference type="EMBL" id="CP001663">
    <property type="protein sequence ID" value="AFP43097.1"/>
    <property type="molecule type" value="Genomic_DNA"/>
</dbReference>
<dbReference type="RefSeq" id="WP_011731589.1">
    <property type="nucleotide sequence ID" value="NZ_SIJM01000001.1"/>
</dbReference>
<dbReference type="RefSeq" id="YP_891058.1">
    <property type="nucleotide sequence ID" value="NC_008596.1"/>
</dbReference>
<dbReference type="SMR" id="Q938C9"/>
<dbReference type="STRING" id="246196.MSMEG_6854"/>
<dbReference type="PaxDb" id="246196-MSMEI_6671"/>
<dbReference type="KEGG" id="msb:LJ00_33865"/>
<dbReference type="KEGG" id="msg:MSMEI_6671"/>
<dbReference type="KEGG" id="msm:MSMEG_6854"/>
<dbReference type="PATRIC" id="fig|246196.19.peg.6675"/>
<dbReference type="eggNOG" id="COG0065">
    <property type="taxonomic scope" value="Bacteria"/>
</dbReference>
<dbReference type="OrthoDB" id="9802769at2"/>
<dbReference type="UniPathway" id="UPA00048">
    <property type="reaction ID" value="UER00071"/>
</dbReference>
<dbReference type="Proteomes" id="UP000000757">
    <property type="component" value="Chromosome"/>
</dbReference>
<dbReference type="Proteomes" id="UP000006158">
    <property type="component" value="Chromosome"/>
</dbReference>
<dbReference type="GO" id="GO:0003861">
    <property type="term" value="F:3-isopropylmalate dehydratase activity"/>
    <property type="evidence" value="ECO:0007669"/>
    <property type="project" value="UniProtKB-UniRule"/>
</dbReference>
<dbReference type="GO" id="GO:0051539">
    <property type="term" value="F:4 iron, 4 sulfur cluster binding"/>
    <property type="evidence" value="ECO:0007669"/>
    <property type="project" value="UniProtKB-KW"/>
</dbReference>
<dbReference type="GO" id="GO:0046872">
    <property type="term" value="F:metal ion binding"/>
    <property type="evidence" value="ECO:0007669"/>
    <property type="project" value="UniProtKB-KW"/>
</dbReference>
<dbReference type="GO" id="GO:0009098">
    <property type="term" value="P:L-leucine biosynthetic process"/>
    <property type="evidence" value="ECO:0007669"/>
    <property type="project" value="UniProtKB-UniRule"/>
</dbReference>
<dbReference type="Gene3D" id="3.30.499.10">
    <property type="entry name" value="Aconitase, domain 3"/>
    <property type="match status" value="2"/>
</dbReference>
<dbReference type="HAMAP" id="MF_01027">
    <property type="entry name" value="LeuC_type2"/>
    <property type="match status" value="1"/>
</dbReference>
<dbReference type="InterPro" id="IPR015931">
    <property type="entry name" value="Acnase/IPM_dHydase_lsu_aba_1/3"/>
</dbReference>
<dbReference type="InterPro" id="IPR001030">
    <property type="entry name" value="Acoase/IPM_deHydtase_lsu_aba"/>
</dbReference>
<dbReference type="InterPro" id="IPR036008">
    <property type="entry name" value="Aconitase_4Fe-4S_dom"/>
</dbReference>
<dbReference type="InterPro" id="IPR011826">
    <property type="entry name" value="HAcnase/IPMdehydase_lsu_prok"/>
</dbReference>
<dbReference type="InterPro" id="IPR006251">
    <property type="entry name" value="Homoacnase/IPMdehydase_lsu"/>
</dbReference>
<dbReference type="InterPro" id="IPR050067">
    <property type="entry name" value="IPM_dehydratase_rel_enz"/>
</dbReference>
<dbReference type="NCBIfam" id="TIGR01343">
    <property type="entry name" value="hacA_fam"/>
    <property type="match status" value="1"/>
</dbReference>
<dbReference type="NCBIfam" id="NF001614">
    <property type="entry name" value="PRK00402.1"/>
    <property type="match status" value="1"/>
</dbReference>
<dbReference type="PANTHER" id="PTHR43822:SF2">
    <property type="entry name" value="HOMOACONITASE, MITOCHONDRIAL"/>
    <property type="match status" value="1"/>
</dbReference>
<dbReference type="PANTHER" id="PTHR43822">
    <property type="entry name" value="HOMOACONITASE, MITOCHONDRIAL-RELATED"/>
    <property type="match status" value="1"/>
</dbReference>
<dbReference type="Pfam" id="PF00330">
    <property type="entry name" value="Aconitase"/>
    <property type="match status" value="1"/>
</dbReference>
<dbReference type="PRINTS" id="PR00415">
    <property type="entry name" value="ACONITASE"/>
</dbReference>
<dbReference type="SUPFAM" id="SSF53732">
    <property type="entry name" value="Aconitase iron-sulfur domain"/>
    <property type="match status" value="1"/>
</dbReference>
<gene>
    <name evidence="1" type="primary">leuC</name>
    <name type="ordered locus">MSMEG_6854</name>
    <name type="ordered locus">MSMEI_6671</name>
</gene>
<comment type="function">
    <text evidence="1">Catalyzes the isomerization between 2-isopropylmalate and 3-isopropylmalate, via the formation of 2-isopropylmaleate.</text>
</comment>
<comment type="catalytic activity">
    <reaction evidence="1">
        <text>(2R,3S)-3-isopropylmalate = (2S)-2-isopropylmalate</text>
        <dbReference type="Rhea" id="RHEA:32287"/>
        <dbReference type="ChEBI" id="CHEBI:1178"/>
        <dbReference type="ChEBI" id="CHEBI:35121"/>
        <dbReference type="EC" id="4.2.1.33"/>
    </reaction>
</comment>
<comment type="cofactor">
    <cofactor evidence="1">
        <name>[4Fe-4S] cluster</name>
        <dbReference type="ChEBI" id="CHEBI:49883"/>
    </cofactor>
    <text evidence="1">Binds 1 [4Fe-4S] cluster per subunit.</text>
</comment>
<comment type="pathway">
    <text evidence="1">Amino-acid biosynthesis; L-leucine biosynthesis; L-leucine from 3-methyl-2-oxobutanoate: step 2/4.</text>
</comment>
<comment type="subunit">
    <text evidence="1">Heterodimer of LeuC and LeuD.</text>
</comment>
<comment type="similarity">
    <text evidence="1">Belongs to the aconitase/IPM isomerase family. LeuC type 2 subfamily.</text>
</comment>
<protein>
    <recommendedName>
        <fullName evidence="1">3-isopropylmalate dehydratase large subunit</fullName>
        <ecNumber evidence="1">4.2.1.33</ecNumber>
    </recommendedName>
    <alternativeName>
        <fullName evidence="1">Alpha-IPM isomerase</fullName>
        <shortName evidence="1">IPMI</shortName>
    </alternativeName>
    <alternativeName>
        <fullName evidence="1">Isopropylmalate isomerase</fullName>
    </alternativeName>
</protein>
<keyword id="KW-0004">4Fe-4S</keyword>
<keyword id="KW-0028">Amino-acid biosynthesis</keyword>
<keyword id="KW-0100">Branched-chain amino acid biosynthesis</keyword>
<keyword id="KW-0408">Iron</keyword>
<keyword id="KW-0411">Iron-sulfur</keyword>
<keyword id="KW-0432">Leucine biosynthesis</keyword>
<keyword id="KW-0456">Lyase</keyword>
<keyword id="KW-0479">Metal-binding</keyword>
<keyword id="KW-1185">Reference proteome</keyword>
<name>LEUC_MYCS2</name>
<reference key="1">
    <citation type="submission" date="2001-08" db="EMBL/GenBank/DDBJ databases">
        <authorList>
            <person name="Derbyshire K.M."/>
            <person name="Parsons L.M."/>
            <person name="DeVost J."/>
        </authorList>
    </citation>
    <scope>NUCLEOTIDE SEQUENCE [GENOMIC DNA]</scope>
</reference>
<reference key="2">
    <citation type="submission" date="2006-10" db="EMBL/GenBank/DDBJ databases">
        <authorList>
            <person name="Fleischmann R.D."/>
            <person name="Dodson R.J."/>
            <person name="Haft D.H."/>
            <person name="Merkel J.S."/>
            <person name="Nelson W.C."/>
            <person name="Fraser C.M."/>
        </authorList>
    </citation>
    <scope>NUCLEOTIDE SEQUENCE [LARGE SCALE GENOMIC DNA]</scope>
    <source>
        <strain>ATCC 700084 / mc(2)155</strain>
    </source>
</reference>
<reference key="3">
    <citation type="journal article" date="2007" name="Genome Biol.">
        <title>Interrupted coding sequences in Mycobacterium smegmatis: authentic mutations or sequencing errors?</title>
        <authorList>
            <person name="Deshayes C."/>
            <person name="Perrodou E."/>
            <person name="Gallien S."/>
            <person name="Euphrasie D."/>
            <person name="Schaeffer C."/>
            <person name="Van-Dorsselaer A."/>
            <person name="Poch O."/>
            <person name="Lecompte O."/>
            <person name="Reyrat J.-M."/>
        </authorList>
    </citation>
    <scope>NUCLEOTIDE SEQUENCE [LARGE SCALE GENOMIC DNA]</scope>
    <source>
        <strain>ATCC 700084 / mc(2)155</strain>
    </source>
</reference>
<reference key="4">
    <citation type="journal article" date="2009" name="Genome Res.">
        <title>Ortho-proteogenomics: multiple proteomes investigation through orthology and a new MS-based protocol.</title>
        <authorList>
            <person name="Gallien S."/>
            <person name="Perrodou E."/>
            <person name="Carapito C."/>
            <person name="Deshayes C."/>
            <person name="Reyrat J.-M."/>
            <person name="Van Dorsselaer A."/>
            <person name="Poch O."/>
            <person name="Schaeffer C."/>
            <person name="Lecompte O."/>
        </authorList>
    </citation>
    <scope>NUCLEOTIDE SEQUENCE [LARGE SCALE GENOMIC DNA]</scope>
    <source>
        <strain>ATCC 700084 / mc(2)155</strain>
    </source>
</reference>
<evidence type="ECO:0000255" key="1">
    <source>
        <dbReference type="HAMAP-Rule" id="MF_01027"/>
    </source>
</evidence>
<accession>Q938C9</accession>
<accession>A0R7C0</accession>
<accession>I7GBT3</accession>